<keyword id="KW-0119">Carbohydrate metabolism</keyword>
<keyword id="KW-0963">Cytoplasm</keyword>
<keyword id="KW-0456">Lyase</keyword>
<keyword id="KW-0704">Schiff base</keyword>
<accession>B5BGP5</accession>
<comment type="function">
    <text evidence="1">Catalyzes the reversible aldol cleavage of N-acetylneuraminic acid (sialic acid; Neu5Ac) to form pyruvate and N-acetylmannosamine (ManNAc) via a Schiff base intermediate.</text>
</comment>
<comment type="catalytic activity">
    <reaction evidence="1">
        <text>aceneuramate = aldehydo-N-acetyl-D-mannosamine + pyruvate</text>
        <dbReference type="Rhea" id="RHEA:23296"/>
        <dbReference type="ChEBI" id="CHEBI:15361"/>
        <dbReference type="ChEBI" id="CHEBI:17122"/>
        <dbReference type="ChEBI" id="CHEBI:173083"/>
        <dbReference type="EC" id="4.1.3.3"/>
    </reaction>
</comment>
<comment type="pathway">
    <text evidence="1">Amino-sugar metabolism; N-acetylneuraminate degradation; D-fructose 6-phosphate from N-acetylneuraminate: step 1/5.</text>
</comment>
<comment type="subunit">
    <text evidence="1">Homotetramer.</text>
</comment>
<comment type="subcellular location">
    <subcellularLocation>
        <location evidence="1">Cytoplasm</location>
    </subcellularLocation>
</comment>
<comment type="similarity">
    <text evidence="1">Belongs to the DapA family. NanA subfamily.</text>
</comment>
<organism>
    <name type="scientific">Salmonella paratyphi A (strain AKU_12601)</name>
    <dbReference type="NCBI Taxonomy" id="554290"/>
    <lineage>
        <taxon>Bacteria</taxon>
        <taxon>Pseudomonadati</taxon>
        <taxon>Pseudomonadota</taxon>
        <taxon>Gammaproteobacteria</taxon>
        <taxon>Enterobacterales</taxon>
        <taxon>Enterobacteriaceae</taxon>
        <taxon>Salmonella</taxon>
    </lineage>
</organism>
<proteinExistence type="inferred from homology"/>
<gene>
    <name evidence="1" type="primary">nanA</name>
    <name type="ordered locus">SSPA2994</name>
</gene>
<feature type="chain" id="PRO_1000139744" description="N-acetylneuraminate lyase">
    <location>
        <begin position="1"/>
        <end position="297"/>
    </location>
</feature>
<feature type="active site" description="Proton donor" evidence="1">
    <location>
        <position position="137"/>
    </location>
</feature>
<feature type="active site" description="Schiff-base intermediate with substrate" evidence="1">
    <location>
        <position position="165"/>
    </location>
</feature>
<feature type="binding site" evidence="1">
    <location>
        <position position="47"/>
    </location>
    <ligand>
        <name>aceneuramate</name>
        <dbReference type="ChEBI" id="CHEBI:173083"/>
    </ligand>
</feature>
<feature type="binding site" evidence="1">
    <location>
        <position position="48"/>
    </location>
    <ligand>
        <name>aceneuramate</name>
        <dbReference type="ChEBI" id="CHEBI:173083"/>
    </ligand>
</feature>
<feature type="binding site" evidence="1">
    <location>
        <position position="167"/>
    </location>
    <ligand>
        <name>aceneuramate</name>
        <dbReference type="ChEBI" id="CHEBI:173083"/>
    </ligand>
</feature>
<feature type="binding site" evidence="1">
    <location>
        <position position="189"/>
    </location>
    <ligand>
        <name>aceneuramate</name>
        <dbReference type="ChEBI" id="CHEBI:173083"/>
    </ligand>
</feature>
<feature type="binding site" evidence="1">
    <location>
        <position position="191"/>
    </location>
    <ligand>
        <name>aceneuramate</name>
        <dbReference type="ChEBI" id="CHEBI:173083"/>
    </ligand>
</feature>
<feature type="binding site" evidence="1">
    <location>
        <position position="192"/>
    </location>
    <ligand>
        <name>aceneuramate</name>
        <dbReference type="ChEBI" id="CHEBI:173083"/>
    </ligand>
</feature>
<feature type="binding site" evidence="1">
    <location>
        <position position="208"/>
    </location>
    <ligand>
        <name>aceneuramate</name>
        <dbReference type="ChEBI" id="CHEBI:173083"/>
    </ligand>
</feature>
<name>NANA_SALPK</name>
<dbReference type="EC" id="4.1.3.3" evidence="1"/>
<dbReference type="EMBL" id="FM200053">
    <property type="protein sequence ID" value="CAR61243.1"/>
    <property type="molecule type" value="Genomic_DNA"/>
</dbReference>
<dbReference type="RefSeq" id="WP_001029662.1">
    <property type="nucleotide sequence ID" value="NC_011147.1"/>
</dbReference>
<dbReference type="SMR" id="B5BGP5"/>
<dbReference type="KEGG" id="sek:SSPA2994"/>
<dbReference type="HOGENOM" id="CLU_049343_6_0_6"/>
<dbReference type="UniPathway" id="UPA00629">
    <property type="reaction ID" value="UER00680"/>
</dbReference>
<dbReference type="Proteomes" id="UP000001869">
    <property type="component" value="Chromosome"/>
</dbReference>
<dbReference type="GO" id="GO:0005829">
    <property type="term" value="C:cytosol"/>
    <property type="evidence" value="ECO:0007669"/>
    <property type="project" value="TreeGrafter"/>
</dbReference>
<dbReference type="GO" id="GO:0008747">
    <property type="term" value="F:N-acetylneuraminate lyase activity"/>
    <property type="evidence" value="ECO:0007669"/>
    <property type="project" value="UniProtKB-UniRule"/>
</dbReference>
<dbReference type="GO" id="GO:0005975">
    <property type="term" value="P:carbohydrate metabolic process"/>
    <property type="evidence" value="ECO:0007669"/>
    <property type="project" value="UniProtKB-UniRule"/>
</dbReference>
<dbReference type="GO" id="GO:0019262">
    <property type="term" value="P:N-acetylneuraminate catabolic process"/>
    <property type="evidence" value="ECO:0007669"/>
    <property type="project" value="UniProtKB-UniRule"/>
</dbReference>
<dbReference type="CDD" id="cd00954">
    <property type="entry name" value="NAL"/>
    <property type="match status" value="1"/>
</dbReference>
<dbReference type="FunFam" id="3.20.20.70:FF:000039">
    <property type="entry name" value="N-acetylneuraminate lyase"/>
    <property type="match status" value="1"/>
</dbReference>
<dbReference type="Gene3D" id="3.20.20.70">
    <property type="entry name" value="Aldolase class I"/>
    <property type="match status" value="1"/>
</dbReference>
<dbReference type="HAMAP" id="MF_01237">
    <property type="entry name" value="N_acetylneuram_lyase"/>
    <property type="match status" value="1"/>
</dbReference>
<dbReference type="InterPro" id="IPR013785">
    <property type="entry name" value="Aldolase_TIM"/>
</dbReference>
<dbReference type="InterPro" id="IPR002220">
    <property type="entry name" value="DapA-like"/>
</dbReference>
<dbReference type="InterPro" id="IPR005264">
    <property type="entry name" value="NanA"/>
</dbReference>
<dbReference type="InterPro" id="IPR020625">
    <property type="entry name" value="Schiff_base-form_aldolases_AS"/>
</dbReference>
<dbReference type="InterPro" id="IPR020624">
    <property type="entry name" value="Schiff_base-form_aldolases_CS"/>
</dbReference>
<dbReference type="NCBIfam" id="TIGR00683">
    <property type="entry name" value="nanA"/>
    <property type="match status" value="1"/>
</dbReference>
<dbReference type="NCBIfam" id="NF003164">
    <property type="entry name" value="PRK04147.1"/>
    <property type="match status" value="1"/>
</dbReference>
<dbReference type="PANTHER" id="PTHR42849">
    <property type="entry name" value="N-ACETYLNEURAMINATE LYASE"/>
    <property type="match status" value="1"/>
</dbReference>
<dbReference type="PANTHER" id="PTHR42849:SF1">
    <property type="entry name" value="N-ACETYLNEURAMINATE LYASE"/>
    <property type="match status" value="1"/>
</dbReference>
<dbReference type="Pfam" id="PF00701">
    <property type="entry name" value="DHDPS"/>
    <property type="match status" value="1"/>
</dbReference>
<dbReference type="PIRSF" id="PIRSF001365">
    <property type="entry name" value="DHDPS"/>
    <property type="match status" value="1"/>
</dbReference>
<dbReference type="PRINTS" id="PR00146">
    <property type="entry name" value="DHPICSNTHASE"/>
</dbReference>
<dbReference type="SMART" id="SM01130">
    <property type="entry name" value="DHDPS"/>
    <property type="match status" value="1"/>
</dbReference>
<dbReference type="SUPFAM" id="SSF51569">
    <property type="entry name" value="Aldolase"/>
    <property type="match status" value="1"/>
</dbReference>
<dbReference type="PROSITE" id="PS00665">
    <property type="entry name" value="DHDPS_1"/>
    <property type="match status" value="1"/>
</dbReference>
<dbReference type="PROSITE" id="PS00666">
    <property type="entry name" value="DHDPS_2"/>
    <property type="match status" value="1"/>
</dbReference>
<reference key="1">
    <citation type="journal article" date="2009" name="BMC Genomics">
        <title>Pseudogene accumulation in the evolutionary histories of Salmonella enterica serovars Paratyphi A and Typhi.</title>
        <authorList>
            <person name="Holt K.E."/>
            <person name="Thomson N.R."/>
            <person name="Wain J."/>
            <person name="Langridge G.C."/>
            <person name="Hasan R."/>
            <person name="Bhutta Z.A."/>
            <person name="Quail M.A."/>
            <person name="Norbertczak H."/>
            <person name="Walker D."/>
            <person name="Simmonds M."/>
            <person name="White B."/>
            <person name="Bason N."/>
            <person name="Mungall K."/>
            <person name="Dougan G."/>
            <person name="Parkhill J."/>
        </authorList>
    </citation>
    <scope>NUCLEOTIDE SEQUENCE [LARGE SCALE GENOMIC DNA]</scope>
    <source>
        <strain>AKU_12601</strain>
    </source>
</reference>
<evidence type="ECO:0000255" key="1">
    <source>
        <dbReference type="HAMAP-Rule" id="MF_01237"/>
    </source>
</evidence>
<protein>
    <recommendedName>
        <fullName evidence="1">N-acetylneuraminate lyase</fullName>
        <shortName evidence="1">NAL</shortName>
        <shortName evidence="1">Neu5Ac lyase</shortName>
        <ecNumber evidence="1">4.1.3.3</ecNumber>
    </recommendedName>
    <alternativeName>
        <fullName evidence="1">N-acetylneuraminate pyruvate-lyase</fullName>
    </alternativeName>
    <alternativeName>
        <fullName evidence="1">N-acetylneuraminic acid aldolase</fullName>
    </alternativeName>
    <alternativeName>
        <fullName evidence="1">Sialate lyase</fullName>
    </alternativeName>
    <alternativeName>
        <fullName evidence="1">Sialic acid aldolase</fullName>
    </alternativeName>
    <alternativeName>
        <fullName evidence="1">Sialic acid lyase</fullName>
    </alternativeName>
</protein>
<sequence length="297" mass="32482">MAKALQGVMAALLTPFDHQQQLDSESLRRLVRFNIGQGIDGLYVGGSTGEAFVQSLAEREQVLEIVAEEAKGKITLIAHVGTVSTAESQQLASAAKRYGFDAVSAVTPFYYPFSFEEHCDHYRAIIDSADGLPMVVYNIPALSGVKLTLDQINTLVTLPGVNALKQTSGDLFQMEQIRRAHPDLVLYNGYDEIFASGLLAGADGGIGSTYNIMGWRYQGIVQALREGDVAKAQRLQTECNKVIDLLIKTGVFRGLKTVLHYMDVVSVPLCRKPFAPVDEKYLPALKALAQQLMEEKA</sequence>